<evidence type="ECO:0000255" key="1">
    <source>
        <dbReference type="HAMAP-Rule" id="MF_00690"/>
    </source>
</evidence>
<name>YHEU_SHIDS</name>
<reference key="1">
    <citation type="journal article" date="2005" name="Nucleic Acids Res.">
        <title>Genome dynamics and diversity of Shigella species, the etiologic agents of bacillary dysentery.</title>
        <authorList>
            <person name="Yang F."/>
            <person name="Yang J."/>
            <person name="Zhang X."/>
            <person name="Chen L."/>
            <person name="Jiang Y."/>
            <person name="Yan Y."/>
            <person name="Tang X."/>
            <person name="Wang J."/>
            <person name="Xiong Z."/>
            <person name="Dong J."/>
            <person name="Xue Y."/>
            <person name="Zhu Y."/>
            <person name="Xu X."/>
            <person name="Sun L."/>
            <person name="Chen S."/>
            <person name="Nie H."/>
            <person name="Peng J."/>
            <person name="Xu J."/>
            <person name="Wang Y."/>
            <person name="Yuan Z."/>
            <person name="Wen Y."/>
            <person name="Yao Z."/>
            <person name="Shen Y."/>
            <person name="Qiang B."/>
            <person name="Hou Y."/>
            <person name="Yu J."/>
            <person name="Jin Q."/>
        </authorList>
    </citation>
    <scope>NUCLEOTIDE SEQUENCE [LARGE SCALE GENOMIC DNA]</scope>
    <source>
        <strain>Sd197</strain>
    </source>
</reference>
<sequence>MLITWQDLSPETLENLIESFVLREGTDYGEHERTLEQKVADVKRQLQCGEAVLVWSELHETVNIMPRSQFRE</sequence>
<comment type="similarity">
    <text evidence="1">Belongs to the UPF0270 family.</text>
</comment>
<proteinExistence type="inferred from homology"/>
<gene>
    <name evidence="1" type="primary">yheU</name>
    <name type="ordered locus">SDY_3516</name>
</gene>
<dbReference type="EMBL" id="CP000034">
    <property type="protein sequence ID" value="ABB63494.1"/>
    <property type="molecule type" value="Genomic_DNA"/>
</dbReference>
<dbReference type="RefSeq" id="WP_000909421.1">
    <property type="nucleotide sequence ID" value="NC_007606.1"/>
</dbReference>
<dbReference type="RefSeq" id="YP_404985.1">
    <property type="nucleotide sequence ID" value="NC_007606.1"/>
</dbReference>
<dbReference type="SMR" id="Q32B11"/>
<dbReference type="STRING" id="300267.SDY_3516"/>
<dbReference type="EnsemblBacteria" id="ABB63494">
    <property type="protein sequence ID" value="ABB63494"/>
    <property type="gene ID" value="SDY_3516"/>
</dbReference>
<dbReference type="KEGG" id="sdy:SDY_3516"/>
<dbReference type="PATRIC" id="fig|300267.13.peg.4170"/>
<dbReference type="HOGENOM" id="CLU_186759_1_0_6"/>
<dbReference type="Proteomes" id="UP000002716">
    <property type="component" value="Chromosome"/>
</dbReference>
<dbReference type="Gene3D" id="1.10.10.610">
    <property type="entry name" value="YehU-like"/>
    <property type="match status" value="1"/>
</dbReference>
<dbReference type="HAMAP" id="MF_00690">
    <property type="entry name" value="UPF0270"/>
    <property type="match status" value="1"/>
</dbReference>
<dbReference type="InterPro" id="IPR010648">
    <property type="entry name" value="UPF0270"/>
</dbReference>
<dbReference type="InterPro" id="IPR036685">
    <property type="entry name" value="YehU-like_sf"/>
</dbReference>
<dbReference type="NCBIfam" id="NF003438">
    <property type="entry name" value="PRK04966.1"/>
    <property type="match status" value="1"/>
</dbReference>
<dbReference type="Pfam" id="PF06794">
    <property type="entry name" value="UPF0270"/>
    <property type="match status" value="1"/>
</dbReference>
<dbReference type="PIRSF" id="PIRSF006169">
    <property type="entry name" value="UCP006169"/>
    <property type="match status" value="1"/>
</dbReference>
<dbReference type="SUPFAM" id="SSF118001">
    <property type="entry name" value="YehU-like"/>
    <property type="match status" value="1"/>
</dbReference>
<keyword id="KW-1185">Reference proteome</keyword>
<feature type="chain" id="PRO_1000045175" description="UPF0270 protein YheU">
    <location>
        <begin position="1"/>
        <end position="72"/>
    </location>
</feature>
<accession>Q32B11</accession>
<organism>
    <name type="scientific">Shigella dysenteriae serotype 1 (strain Sd197)</name>
    <dbReference type="NCBI Taxonomy" id="300267"/>
    <lineage>
        <taxon>Bacteria</taxon>
        <taxon>Pseudomonadati</taxon>
        <taxon>Pseudomonadota</taxon>
        <taxon>Gammaproteobacteria</taxon>
        <taxon>Enterobacterales</taxon>
        <taxon>Enterobacteriaceae</taxon>
        <taxon>Shigella</taxon>
    </lineage>
</organism>
<protein>
    <recommendedName>
        <fullName evidence="1">UPF0270 protein YheU</fullName>
    </recommendedName>
</protein>